<reference key="1">
    <citation type="submission" date="2008-05" db="EMBL/GenBank/DDBJ databases">
        <title>Complete sequence of Shigella boydii serotype 18 strain BS512.</title>
        <authorList>
            <person name="Rasko D.A."/>
            <person name="Rosovitz M."/>
            <person name="Maurelli A.T."/>
            <person name="Myers G."/>
            <person name="Seshadri R."/>
            <person name="Cer R."/>
            <person name="Jiang L."/>
            <person name="Ravel J."/>
            <person name="Sebastian Y."/>
        </authorList>
    </citation>
    <scope>NUCLEOTIDE SEQUENCE [LARGE SCALE GENOMIC DNA]</scope>
    <source>
        <strain>CDC 3083-94 / BS512</strain>
    </source>
</reference>
<gene>
    <name evidence="1" type="primary">maeA</name>
    <name type="ordered locus">SbBS512_E1742</name>
</gene>
<protein>
    <recommendedName>
        <fullName evidence="1">NAD-dependent malic enzyme</fullName>
        <shortName evidence="1">NAD-ME</shortName>
        <ecNumber evidence="1">1.1.1.38</ecNumber>
    </recommendedName>
</protein>
<dbReference type="EC" id="1.1.1.38" evidence="1"/>
<dbReference type="EMBL" id="CP001063">
    <property type="protein sequence ID" value="ACD08170.1"/>
    <property type="molecule type" value="Genomic_DNA"/>
</dbReference>
<dbReference type="RefSeq" id="WP_000433446.1">
    <property type="nucleotide sequence ID" value="NC_010658.1"/>
</dbReference>
<dbReference type="SMR" id="B2U1M1"/>
<dbReference type="STRING" id="344609.SbBS512_E1742"/>
<dbReference type="KEGG" id="sbc:SbBS512_E1742"/>
<dbReference type="HOGENOM" id="CLU_011405_5_2_6"/>
<dbReference type="Proteomes" id="UP000001030">
    <property type="component" value="Chromosome"/>
</dbReference>
<dbReference type="GO" id="GO:0005829">
    <property type="term" value="C:cytosol"/>
    <property type="evidence" value="ECO:0007669"/>
    <property type="project" value="TreeGrafter"/>
</dbReference>
<dbReference type="GO" id="GO:0004471">
    <property type="term" value="F:malate dehydrogenase (decarboxylating) (NAD+) activity"/>
    <property type="evidence" value="ECO:0007669"/>
    <property type="project" value="UniProtKB-UniRule"/>
</dbReference>
<dbReference type="GO" id="GO:0046872">
    <property type="term" value="F:metal ion binding"/>
    <property type="evidence" value="ECO:0007669"/>
    <property type="project" value="UniProtKB-KW"/>
</dbReference>
<dbReference type="GO" id="GO:0051287">
    <property type="term" value="F:NAD binding"/>
    <property type="evidence" value="ECO:0007669"/>
    <property type="project" value="InterPro"/>
</dbReference>
<dbReference type="GO" id="GO:0008948">
    <property type="term" value="F:oxaloacetate decarboxylase activity"/>
    <property type="evidence" value="ECO:0007669"/>
    <property type="project" value="UniProtKB-UniRule"/>
</dbReference>
<dbReference type="GO" id="GO:0006108">
    <property type="term" value="P:malate metabolic process"/>
    <property type="evidence" value="ECO:0007669"/>
    <property type="project" value="TreeGrafter"/>
</dbReference>
<dbReference type="CDD" id="cd05312">
    <property type="entry name" value="NAD_bind_1_malic_enz"/>
    <property type="match status" value="1"/>
</dbReference>
<dbReference type="FunFam" id="3.40.50.10380:FF:000001">
    <property type="entry name" value="NAD-dependent malic enzyme"/>
    <property type="match status" value="1"/>
</dbReference>
<dbReference type="FunFam" id="3.40.50.720:FF:000055">
    <property type="entry name" value="NAD-dependent malic enzyme"/>
    <property type="match status" value="1"/>
</dbReference>
<dbReference type="Gene3D" id="3.40.50.10380">
    <property type="entry name" value="Malic enzyme, N-terminal domain"/>
    <property type="match status" value="1"/>
</dbReference>
<dbReference type="Gene3D" id="3.40.50.720">
    <property type="entry name" value="NAD(P)-binding Rossmann-like Domain"/>
    <property type="match status" value="1"/>
</dbReference>
<dbReference type="HAMAP" id="MF_01619">
    <property type="entry name" value="NAD_malic_enz"/>
    <property type="match status" value="1"/>
</dbReference>
<dbReference type="InterPro" id="IPR046346">
    <property type="entry name" value="Aminoacid_DH-like_N_sf"/>
</dbReference>
<dbReference type="InterPro" id="IPR015884">
    <property type="entry name" value="Malic_enzyme_CS"/>
</dbReference>
<dbReference type="InterPro" id="IPR012301">
    <property type="entry name" value="Malic_N_dom"/>
</dbReference>
<dbReference type="InterPro" id="IPR037062">
    <property type="entry name" value="Malic_N_dom_sf"/>
</dbReference>
<dbReference type="InterPro" id="IPR012302">
    <property type="entry name" value="Malic_NAD-bd"/>
</dbReference>
<dbReference type="InterPro" id="IPR001891">
    <property type="entry name" value="Malic_OxRdtase"/>
</dbReference>
<dbReference type="InterPro" id="IPR036291">
    <property type="entry name" value="NAD(P)-bd_dom_sf"/>
</dbReference>
<dbReference type="InterPro" id="IPR023667">
    <property type="entry name" value="NAD_malic_enz_proteobac"/>
</dbReference>
<dbReference type="NCBIfam" id="NF010052">
    <property type="entry name" value="PRK13529.1"/>
    <property type="match status" value="1"/>
</dbReference>
<dbReference type="PANTHER" id="PTHR23406">
    <property type="entry name" value="MALIC ENZYME-RELATED"/>
    <property type="match status" value="1"/>
</dbReference>
<dbReference type="PANTHER" id="PTHR23406:SF34">
    <property type="entry name" value="NAD-DEPENDENT MALIC ENZYME, MITOCHONDRIAL"/>
    <property type="match status" value="1"/>
</dbReference>
<dbReference type="Pfam" id="PF00390">
    <property type="entry name" value="malic"/>
    <property type="match status" value="1"/>
</dbReference>
<dbReference type="Pfam" id="PF03949">
    <property type="entry name" value="Malic_M"/>
    <property type="match status" value="1"/>
</dbReference>
<dbReference type="PIRSF" id="PIRSF000106">
    <property type="entry name" value="ME"/>
    <property type="match status" value="1"/>
</dbReference>
<dbReference type="PRINTS" id="PR00072">
    <property type="entry name" value="MALOXRDTASE"/>
</dbReference>
<dbReference type="SMART" id="SM01274">
    <property type="entry name" value="malic"/>
    <property type="match status" value="1"/>
</dbReference>
<dbReference type="SMART" id="SM00919">
    <property type="entry name" value="Malic_M"/>
    <property type="match status" value="1"/>
</dbReference>
<dbReference type="SUPFAM" id="SSF53223">
    <property type="entry name" value="Aminoacid dehydrogenase-like, N-terminal domain"/>
    <property type="match status" value="1"/>
</dbReference>
<dbReference type="SUPFAM" id="SSF51735">
    <property type="entry name" value="NAD(P)-binding Rossmann-fold domains"/>
    <property type="match status" value="1"/>
</dbReference>
<dbReference type="PROSITE" id="PS00331">
    <property type="entry name" value="MALIC_ENZYMES"/>
    <property type="match status" value="1"/>
</dbReference>
<name>MAO1_SHIB3</name>
<proteinExistence type="inferred from homology"/>
<sequence length="565" mass="63175">MEPKTKKQRSLYIPYAGPVLLEFPLLNKGSAFSMEERRNFNLLGLLPEVVETIEEQAERAWIQYQGFKTEIDKHIYLRNIQDTNETLFYRLVNNHLDEMMPVIYTPTVGAACERFSEIYRRSRGVFISYQNRHNMDDILQNVPNHNIKVIVVTDGERILGLGDQGIGGMGIPIGKLSLYTACGGISPAYTLPVVLDVGTNNQQLLNDPLYMGWRNPRIIDDEYYEFVDEFIQAVKQRWPDVLLQFEDFAQKNAMPLLNRYRNEICSFNDDIQGTAAVTVGTLIAASRAAGGQLSEKKIVFLGAGSAGCGIAEMIIAQTQREGLSEEAARQKVFMVDRFGLLTDKMPNLLPFQTKLVQKRENLSDWDTDSDVLSLLDVVRNVKPDILIGVSGQTGLFTEEIIREMHKHCPRPIVMPLSNPTSRVEATPQDIIAWTEGNALVATGSPFNPVVWKDKIYPIAQCNNAFIFPGIGLGVIASGASRITDEMLMSASETLAQYSPLVLNGEGLVLPELKDIQKVSRAIAFAVGKMAQQQGVAVKTSAEALQQAIDDNFWQAEYRDYRRTSI</sequence>
<comment type="catalytic activity">
    <reaction evidence="1">
        <text>(S)-malate + NAD(+) = pyruvate + CO2 + NADH</text>
        <dbReference type="Rhea" id="RHEA:12653"/>
        <dbReference type="ChEBI" id="CHEBI:15361"/>
        <dbReference type="ChEBI" id="CHEBI:15589"/>
        <dbReference type="ChEBI" id="CHEBI:16526"/>
        <dbReference type="ChEBI" id="CHEBI:57540"/>
        <dbReference type="ChEBI" id="CHEBI:57945"/>
        <dbReference type="EC" id="1.1.1.38"/>
    </reaction>
</comment>
<comment type="catalytic activity">
    <reaction evidence="1">
        <text>oxaloacetate + H(+) = pyruvate + CO2</text>
        <dbReference type="Rhea" id="RHEA:15641"/>
        <dbReference type="ChEBI" id="CHEBI:15361"/>
        <dbReference type="ChEBI" id="CHEBI:15378"/>
        <dbReference type="ChEBI" id="CHEBI:16452"/>
        <dbReference type="ChEBI" id="CHEBI:16526"/>
        <dbReference type="EC" id="1.1.1.38"/>
    </reaction>
</comment>
<comment type="cofactor">
    <cofactor evidence="1">
        <name>Mg(2+)</name>
        <dbReference type="ChEBI" id="CHEBI:18420"/>
    </cofactor>
    <cofactor evidence="1">
        <name>Mn(2+)</name>
        <dbReference type="ChEBI" id="CHEBI:29035"/>
    </cofactor>
    <text evidence="1">Divalent metal cations. Prefers magnesium or manganese.</text>
</comment>
<comment type="subunit">
    <text evidence="1">Homotetramer.</text>
</comment>
<comment type="similarity">
    <text evidence="1">Belongs to the malic enzymes family.</text>
</comment>
<keyword id="KW-0479">Metal-binding</keyword>
<keyword id="KW-0520">NAD</keyword>
<keyword id="KW-0560">Oxidoreductase</keyword>
<keyword id="KW-1185">Reference proteome</keyword>
<organism>
    <name type="scientific">Shigella boydii serotype 18 (strain CDC 3083-94 / BS512)</name>
    <dbReference type="NCBI Taxonomy" id="344609"/>
    <lineage>
        <taxon>Bacteria</taxon>
        <taxon>Pseudomonadati</taxon>
        <taxon>Pseudomonadota</taxon>
        <taxon>Gammaproteobacteria</taxon>
        <taxon>Enterobacterales</taxon>
        <taxon>Enterobacteriaceae</taxon>
        <taxon>Shigella</taxon>
    </lineage>
</organism>
<accession>B2U1M1</accession>
<feature type="chain" id="PRO_1000186013" description="NAD-dependent malic enzyme">
    <location>
        <begin position="1"/>
        <end position="565"/>
    </location>
</feature>
<feature type="active site" description="Proton donor" evidence="1">
    <location>
        <position position="104"/>
    </location>
</feature>
<feature type="active site" description="Proton acceptor" evidence="1">
    <location>
        <position position="175"/>
    </location>
</feature>
<feature type="binding site" evidence="1">
    <location>
        <position position="157"/>
    </location>
    <ligand>
        <name>NAD(+)</name>
        <dbReference type="ChEBI" id="CHEBI:57540"/>
    </ligand>
</feature>
<feature type="binding site" evidence="1">
    <location>
        <position position="246"/>
    </location>
    <ligand>
        <name>a divalent metal cation</name>
        <dbReference type="ChEBI" id="CHEBI:60240"/>
    </ligand>
</feature>
<feature type="binding site" evidence="1">
    <location>
        <position position="247"/>
    </location>
    <ligand>
        <name>a divalent metal cation</name>
        <dbReference type="ChEBI" id="CHEBI:60240"/>
    </ligand>
</feature>
<feature type="binding site" evidence="1">
    <location>
        <position position="270"/>
    </location>
    <ligand>
        <name>a divalent metal cation</name>
        <dbReference type="ChEBI" id="CHEBI:60240"/>
    </ligand>
</feature>
<feature type="binding site" evidence="1">
    <location>
        <position position="270"/>
    </location>
    <ligand>
        <name>NAD(+)</name>
        <dbReference type="ChEBI" id="CHEBI:57540"/>
    </ligand>
</feature>
<feature type="binding site" evidence="1">
    <location>
        <position position="418"/>
    </location>
    <ligand>
        <name>NAD(+)</name>
        <dbReference type="ChEBI" id="CHEBI:57540"/>
    </ligand>
</feature>
<feature type="site" description="Important for activity" evidence="1">
    <location>
        <position position="270"/>
    </location>
</feature>
<evidence type="ECO:0000255" key="1">
    <source>
        <dbReference type="HAMAP-Rule" id="MF_01619"/>
    </source>
</evidence>